<protein>
    <recommendedName>
        <fullName evidence="1">UPF0250 protein Psyr_4360</fullName>
    </recommendedName>
</protein>
<gene>
    <name type="ordered locus">Psyr_4360</name>
</gene>
<evidence type="ECO:0000255" key="1">
    <source>
        <dbReference type="HAMAP-Rule" id="MF_00659"/>
    </source>
</evidence>
<organism>
    <name type="scientific">Pseudomonas syringae pv. syringae (strain B728a)</name>
    <dbReference type="NCBI Taxonomy" id="205918"/>
    <lineage>
        <taxon>Bacteria</taxon>
        <taxon>Pseudomonadati</taxon>
        <taxon>Pseudomonadota</taxon>
        <taxon>Gammaproteobacteria</taxon>
        <taxon>Pseudomonadales</taxon>
        <taxon>Pseudomonadaceae</taxon>
        <taxon>Pseudomonas</taxon>
        <taxon>Pseudomonas syringae</taxon>
    </lineage>
</organism>
<reference key="1">
    <citation type="journal article" date="2005" name="Proc. Natl. Acad. Sci. U.S.A.">
        <title>Comparison of the complete genome sequences of Pseudomonas syringae pv. syringae B728a and pv. tomato DC3000.</title>
        <authorList>
            <person name="Feil H."/>
            <person name="Feil W.S."/>
            <person name="Chain P."/>
            <person name="Larimer F."/>
            <person name="Dibartolo G."/>
            <person name="Copeland A."/>
            <person name="Lykidis A."/>
            <person name="Trong S."/>
            <person name="Nolan M."/>
            <person name="Goltsman E."/>
            <person name="Thiel J."/>
            <person name="Malfatti S."/>
            <person name="Loper J.E."/>
            <person name="Lapidus A."/>
            <person name="Detter J.C."/>
            <person name="Land M."/>
            <person name="Richardson P.M."/>
            <person name="Kyrpides N.C."/>
            <person name="Ivanova N."/>
            <person name="Lindow S.E."/>
        </authorList>
    </citation>
    <scope>NUCLEOTIDE SEQUENCE [LARGE SCALE GENOMIC DNA]</scope>
    <source>
        <strain>B728a</strain>
    </source>
</reference>
<accession>Q4ZN82</accession>
<sequence>MTDTDIKSHKIEFPCNDYPIKVIGDTSVGFTAAVMEVLEKHATVDLKTLAERQSSNGKYTTVQLHIVATGEDQLRDINSALRATGFVHMVL</sequence>
<proteinExistence type="inferred from homology"/>
<dbReference type="EMBL" id="CP000075">
    <property type="protein sequence ID" value="AAY39390.1"/>
    <property type="molecule type" value="Genomic_DNA"/>
</dbReference>
<dbReference type="RefSeq" id="WP_003340907.1">
    <property type="nucleotide sequence ID" value="NC_007005.1"/>
</dbReference>
<dbReference type="RefSeq" id="YP_237428.1">
    <property type="nucleotide sequence ID" value="NC_007005.1"/>
</dbReference>
<dbReference type="SMR" id="Q4ZN82"/>
<dbReference type="STRING" id="205918.Psyr_4360"/>
<dbReference type="KEGG" id="psb:Psyr_4360"/>
<dbReference type="PATRIC" id="fig|205918.7.peg.4500"/>
<dbReference type="eggNOG" id="COG2921">
    <property type="taxonomic scope" value="Bacteria"/>
</dbReference>
<dbReference type="HOGENOM" id="CLU_161438_1_0_6"/>
<dbReference type="OrthoDB" id="9793424at2"/>
<dbReference type="Proteomes" id="UP000000426">
    <property type="component" value="Chromosome"/>
</dbReference>
<dbReference type="GO" id="GO:0005829">
    <property type="term" value="C:cytosol"/>
    <property type="evidence" value="ECO:0007669"/>
    <property type="project" value="TreeGrafter"/>
</dbReference>
<dbReference type="Gene3D" id="3.30.70.260">
    <property type="match status" value="1"/>
</dbReference>
<dbReference type="HAMAP" id="MF_00659">
    <property type="entry name" value="UPF0250"/>
    <property type="match status" value="1"/>
</dbReference>
<dbReference type="InterPro" id="IPR007454">
    <property type="entry name" value="UPF0250_YbeD-like"/>
</dbReference>
<dbReference type="InterPro" id="IPR027471">
    <property type="entry name" value="YbeD-like_sf"/>
</dbReference>
<dbReference type="NCBIfam" id="NF001486">
    <property type="entry name" value="PRK00341.1"/>
    <property type="match status" value="1"/>
</dbReference>
<dbReference type="PANTHER" id="PTHR38036">
    <property type="entry name" value="UPF0250 PROTEIN YBED"/>
    <property type="match status" value="1"/>
</dbReference>
<dbReference type="PANTHER" id="PTHR38036:SF1">
    <property type="entry name" value="UPF0250 PROTEIN YBED"/>
    <property type="match status" value="1"/>
</dbReference>
<dbReference type="Pfam" id="PF04359">
    <property type="entry name" value="DUF493"/>
    <property type="match status" value="1"/>
</dbReference>
<dbReference type="SUPFAM" id="SSF117991">
    <property type="entry name" value="YbeD/HP0495-like"/>
    <property type="match status" value="1"/>
</dbReference>
<feature type="chain" id="PRO_1000061885" description="UPF0250 protein Psyr_4360">
    <location>
        <begin position="1"/>
        <end position="91"/>
    </location>
</feature>
<name>Y4360_PSEU2</name>
<comment type="similarity">
    <text evidence="1">Belongs to the UPF0250 family.</text>
</comment>